<sequence length="196" mass="21290">MAILPIRIVGDPVLHEPTETVSESPAELSELIADMYDTMDAANGVGLAANQVGIPLRLFVYDCPDVDETGKPFRRRGCVVNPVLETSERPETMPDPDDDVEGCLSVPGEQFPTGRAEWAKVTGTDADGNAVEIEGRDFFARMLQHEVGHLDGFLYVDMLVGRNARAAKKTIKRAGWGVPGLSWVPGTVEDPFGHDD</sequence>
<proteinExistence type="inferred from homology"/>
<feature type="chain" id="PRO_1000200743" description="Peptide deformylase">
    <location>
        <begin position="1"/>
        <end position="196"/>
    </location>
</feature>
<feature type="active site" evidence="1">
    <location>
        <position position="146"/>
    </location>
</feature>
<feature type="binding site" evidence="1">
    <location>
        <position position="103"/>
    </location>
    <ligand>
        <name>Fe cation</name>
        <dbReference type="ChEBI" id="CHEBI:24875"/>
    </ligand>
</feature>
<feature type="binding site" evidence="1">
    <location>
        <position position="145"/>
    </location>
    <ligand>
        <name>Fe cation</name>
        <dbReference type="ChEBI" id="CHEBI:24875"/>
    </ligand>
</feature>
<feature type="binding site" evidence="1">
    <location>
        <position position="149"/>
    </location>
    <ligand>
        <name>Fe cation</name>
        <dbReference type="ChEBI" id="CHEBI:24875"/>
    </ligand>
</feature>
<gene>
    <name evidence="1" type="primary">def</name>
    <name type="ordered locus">ROP_18920</name>
</gene>
<organism>
    <name type="scientific">Rhodococcus opacus (strain B4)</name>
    <dbReference type="NCBI Taxonomy" id="632772"/>
    <lineage>
        <taxon>Bacteria</taxon>
        <taxon>Bacillati</taxon>
        <taxon>Actinomycetota</taxon>
        <taxon>Actinomycetes</taxon>
        <taxon>Mycobacteriales</taxon>
        <taxon>Nocardiaceae</taxon>
        <taxon>Rhodococcus</taxon>
    </lineage>
</organism>
<evidence type="ECO:0000255" key="1">
    <source>
        <dbReference type="HAMAP-Rule" id="MF_00163"/>
    </source>
</evidence>
<comment type="function">
    <text evidence="1">Removes the formyl group from the N-terminal Met of newly synthesized proteins. Requires at least a dipeptide for an efficient rate of reaction. N-terminal L-methionine is a prerequisite for activity but the enzyme has broad specificity at other positions.</text>
</comment>
<comment type="catalytic activity">
    <reaction evidence="1">
        <text>N-terminal N-formyl-L-methionyl-[peptide] + H2O = N-terminal L-methionyl-[peptide] + formate</text>
        <dbReference type="Rhea" id="RHEA:24420"/>
        <dbReference type="Rhea" id="RHEA-COMP:10639"/>
        <dbReference type="Rhea" id="RHEA-COMP:10640"/>
        <dbReference type="ChEBI" id="CHEBI:15377"/>
        <dbReference type="ChEBI" id="CHEBI:15740"/>
        <dbReference type="ChEBI" id="CHEBI:49298"/>
        <dbReference type="ChEBI" id="CHEBI:64731"/>
        <dbReference type="EC" id="3.5.1.88"/>
    </reaction>
</comment>
<comment type="cofactor">
    <cofactor evidence="1">
        <name>Fe(2+)</name>
        <dbReference type="ChEBI" id="CHEBI:29033"/>
    </cofactor>
    <text evidence="1">Binds 1 Fe(2+) ion.</text>
</comment>
<comment type="similarity">
    <text evidence="1">Belongs to the polypeptide deformylase family.</text>
</comment>
<dbReference type="EC" id="3.5.1.88" evidence="1"/>
<dbReference type="EMBL" id="AP011115">
    <property type="protein sequence ID" value="BAH50139.1"/>
    <property type="molecule type" value="Genomic_DNA"/>
</dbReference>
<dbReference type="RefSeq" id="WP_012689095.1">
    <property type="nucleotide sequence ID" value="NC_012522.1"/>
</dbReference>
<dbReference type="SMR" id="C1B0D9"/>
<dbReference type="STRING" id="632772.ROP_18920"/>
<dbReference type="KEGG" id="rop:ROP_18920"/>
<dbReference type="PATRIC" id="fig|632772.20.peg.1985"/>
<dbReference type="HOGENOM" id="CLU_061901_1_2_11"/>
<dbReference type="OrthoDB" id="9804313at2"/>
<dbReference type="Proteomes" id="UP000002212">
    <property type="component" value="Chromosome"/>
</dbReference>
<dbReference type="GO" id="GO:0046872">
    <property type="term" value="F:metal ion binding"/>
    <property type="evidence" value="ECO:0007669"/>
    <property type="project" value="UniProtKB-KW"/>
</dbReference>
<dbReference type="GO" id="GO:0042586">
    <property type="term" value="F:peptide deformylase activity"/>
    <property type="evidence" value="ECO:0007669"/>
    <property type="project" value="UniProtKB-UniRule"/>
</dbReference>
<dbReference type="GO" id="GO:0043686">
    <property type="term" value="P:co-translational protein modification"/>
    <property type="evidence" value="ECO:0007669"/>
    <property type="project" value="TreeGrafter"/>
</dbReference>
<dbReference type="GO" id="GO:0006412">
    <property type="term" value="P:translation"/>
    <property type="evidence" value="ECO:0007669"/>
    <property type="project" value="UniProtKB-UniRule"/>
</dbReference>
<dbReference type="CDD" id="cd00487">
    <property type="entry name" value="Pep_deformylase"/>
    <property type="match status" value="1"/>
</dbReference>
<dbReference type="Gene3D" id="3.90.45.10">
    <property type="entry name" value="Peptide deformylase"/>
    <property type="match status" value="1"/>
</dbReference>
<dbReference type="HAMAP" id="MF_00163">
    <property type="entry name" value="Pep_deformylase"/>
    <property type="match status" value="1"/>
</dbReference>
<dbReference type="InterPro" id="IPR023635">
    <property type="entry name" value="Peptide_deformylase"/>
</dbReference>
<dbReference type="InterPro" id="IPR036821">
    <property type="entry name" value="Peptide_deformylase_sf"/>
</dbReference>
<dbReference type="NCBIfam" id="TIGR00079">
    <property type="entry name" value="pept_deformyl"/>
    <property type="match status" value="1"/>
</dbReference>
<dbReference type="NCBIfam" id="NF001159">
    <property type="entry name" value="PRK00150.1-3"/>
    <property type="match status" value="1"/>
</dbReference>
<dbReference type="NCBIfam" id="NF009483">
    <property type="entry name" value="PRK12846.1-4"/>
    <property type="match status" value="1"/>
</dbReference>
<dbReference type="PANTHER" id="PTHR10458">
    <property type="entry name" value="PEPTIDE DEFORMYLASE"/>
    <property type="match status" value="1"/>
</dbReference>
<dbReference type="PANTHER" id="PTHR10458:SF2">
    <property type="entry name" value="PEPTIDE DEFORMYLASE, MITOCHONDRIAL"/>
    <property type="match status" value="1"/>
</dbReference>
<dbReference type="Pfam" id="PF01327">
    <property type="entry name" value="Pep_deformylase"/>
    <property type="match status" value="1"/>
</dbReference>
<dbReference type="PIRSF" id="PIRSF004749">
    <property type="entry name" value="Pep_def"/>
    <property type="match status" value="1"/>
</dbReference>
<dbReference type="PRINTS" id="PR01576">
    <property type="entry name" value="PDEFORMYLASE"/>
</dbReference>
<dbReference type="SUPFAM" id="SSF56420">
    <property type="entry name" value="Peptide deformylase"/>
    <property type="match status" value="1"/>
</dbReference>
<protein>
    <recommendedName>
        <fullName evidence="1">Peptide deformylase</fullName>
        <shortName evidence="1">PDF</shortName>
        <ecNumber evidence="1">3.5.1.88</ecNumber>
    </recommendedName>
    <alternativeName>
        <fullName evidence="1">Polypeptide deformylase</fullName>
    </alternativeName>
</protein>
<keyword id="KW-0378">Hydrolase</keyword>
<keyword id="KW-0408">Iron</keyword>
<keyword id="KW-0479">Metal-binding</keyword>
<keyword id="KW-0648">Protein biosynthesis</keyword>
<name>DEF_RHOOB</name>
<accession>C1B0D9</accession>
<reference key="1">
    <citation type="submission" date="2009-03" db="EMBL/GenBank/DDBJ databases">
        <title>Comparison of the complete genome sequences of Rhodococcus erythropolis PR4 and Rhodococcus opacus B4.</title>
        <authorList>
            <person name="Takarada H."/>
            <person name="Sekine M."/>
            <person name="Hosoyama A."/>
            <person name="Yamada R."/>
            <person name="Fujisawa T."/>
            <person name="Omata S."/>
            <person name="Shimizu A."/>
            <person name="Tsukatani N."/>
            <person name="Tanikawa S."/>
            <person name="Fujita N."/>
            <person name="Harayama S."/>
        </authorList>
    </citation>
    <scope>NUCLEOTIDE SEQUENCE [LARGE SCALE GENOMIC DNA]</scope>
    <source>
        <strain>B4</strain>
    </source>
</reference>